<proteinExistence type="evidence at protein level"/>
<name>CM3G_CONRE</name>
<keyword id="KW-0027">Amidation</keyword>
<keyword id="KW-0903">Direct protein sequencing</keyword>
<keyword id="KW-1015">Disulfide bond</keyword>
<keyword id="KW-0964">Secreted</keyword>
<keyword id="KW-0800">Toxin</keyword>
<sequence length="15" mass="1706">CCMALCSRYHCLPCC</sequence>
<protein>
    <recommendedName>
        <fullName evidence="3">Conotoxin reg3g</fullName>
    </recommendedName>
</protein>
<feature type="peptide" id="PRO_0000444763" description="Conotoxin reg3g" evidence="2">
    <location>
        <begin position="1"/>
        <end position="15"/>
    </location>
</feature>
<feature type="modified residue" description="Cysteine amide" evidence="2">
    <location>
        <position position="15"/>
    </location>
</feature>
<feature type="disulfide bond" evidence="1">
    <location>
        <begin position="1"/>
        <end position="15"/>
    </location>
</feature>
<feature type="disulfide bond" evidence="1">
    <location>
        <begin position="2"/>
        <end position="11"/>
    </location>
</feature>
<feature type="disulfide bond" evidence="1">
    <location>
        <begin position="6"/>
        <end position="14"/>
    </location>
</feature>
<reference key="1">
    <citation type="journal article" date="2017" name="FEBS J.">
        <title>Structural plasticity of Mini-M conotoxins: expression of all mini-M subtypes by Conus regius.</title>
        <authorList>
            <person name="Franco A."/>
            <person name="Dovell S."/>
            <person name="Moller C."/>
            <person name="Grandal M."/>
            <person name="Clark E."/>
            <person name="Mari F."/>
        </authorList>
    </citation>
    <scope>PROTEIN SEQUENCE</scope>
    <scope>MASS SPECTROMETRY</scope>
    <scope>SUBCELLULAR LOCATION</scope>
    <scope>AMIDATION AT CYS-15</scope>
    <source>
        <tissue>Venom</tissue>
    </source>
</reference>
<evidence type="ECO:0000250" key="1">
    <source>
        <dbReference type="UniProtKB" id="P85021"/>
    </source>
</evidence>
<evidence type="ECO:0000269" key="2">
    <source>
    </source>
</evidence>
<evidence type="ECO:0000303" key="3">
    <source>
    </source>
</evidence>
<evidence type="ECO:0000305" key="4"/>
<evidence type="ECO:0000305" key="5">
    <source>
    </source>
</evidence>
<dbReference type="GO" id="GO:0005576">
    <property type="term" value="C:extracellular region"/>
    <property type="evidence" value="ECO:0007669"/>
    <property type="project" value="UniProtKB-SubCell"/>
</dbReference>
<dbReference type="GO" id="GO:0090729">
    <property type="term" value="F:toxin activity"/>
    <property type="evidence" value="ECO:0007669"/>
    <property type="project" value="UniProtKB-KW"/>
</dbReference>
<accession>P0DPJ5</accession>
<comment type="subcellular location">
    <subcellularLocation>
        <location evidence="2">Secreted</location>
    </subcellularLocation>
</comment>
<comment type="tissue specificity">
    <text evidence="5">Expressed by the venom duct.</text>
</comment>
<comment type="domain">
    <text evidence="4">The cysteine framework is III (CC-C-C-CC). Classified in the M-2 branch, since 2 residues stand between the fourth and the fifth cysteine residues.</text>
</comment>
<comment type="mass spectrometry" mass="1700.5" method="MALDI" evidence="2"/>
<comment type="similarity">
    <text evidence="4">Belongs to the conotoxin M superfamily.</text>
</comment>
<organism>
    <name type="scientific">Conus regius</name>
    <name type="common">Crown cone</name>
    <dbReference type="NCBI Taxonomy" id="101314"/>
    <lineage>
        <taxon>Eukaryota</taxon>
        <taxon>Metazoa</taxon>
        <taxon>Spiralia</taxon>
        <taxon>Lophotrochozoa</taxon>
        <taxon>Mollusca</taxon>
        <taxon>Gastropoda</taxon>
        <taxon>Caenogastropoda</taxon>
        <taxon>Neogastropoda</taxon>
        <taxon>Conoidea</taxon>
        <taxon>Conidae</taxon>
        <taxon>Conus</taxon>
        <taxon>Stephanoconus</taxon>
    </lineage>
</organism>